<dbReference type="EMBL" id="AK009150">
    <property type="protein sequence ID" value="BAB26107.1"/>
    <property type="molecule type" value="mRNA"/>
</dbReference>
<dbReference type="CCDS" id="CCDS71917.1"/>
<dbReference type="RefSeq" id="NP_001277416.1">
    <property type="nucleotide sequence ID" value="NM_001290487.1"/>
</dbReference>
<dbReference type="SMR" id="Q9D7K5"/>
<dbReference type="FunCoup" id="Q9D7K5">
    <property type="interactions" value="697"/>
</dbReference>
<dbReference type="STRING" id="10090.ENSMUSP00000076563"/>
<dbReference type="PhosphoSitePlus" id="Q9D7K5"/>
<dbReference type="PaxDb" id="10090-ENSMUSP00000083115"/>
<dbReference type="ProteomicsDB" id="279547"/>
<dbReference type="Pumba" id="Q9D7K5"/>
<dbReference type="Antibodypedia" id="62280">
    <property type="antibodies" value="31 antibodies from 9 providers"/>
</dbReference>
<dbReference type="DNASU" id="66349"/>
<dbReference type="Ensembl" id="ENSMUST00000077338.12">
    <property type="protein sequence ID" value="ENSMUSP00000076563.6"/>
    <property type="gene ID" value="ENSMUSG00000057229.12"/>
</dbReference>
<dbReference type="GeneID" id="66349"/>
<dbReference type="KEGG" id="mmu:66349"/>
<dbReference type="UCSC" id="uc009fte.2">
    <property type="organism name" value="mouse"/>
</dbReference>
<dbReference type="AGR" id="MGI:1913599"/>
<dbReference type="CTD" id="55101"/>
<dbReference type="MGI" id="MGI:1913599">
    <property type="gene designation" value="Dmac2"/>
</dbReference>
<dbReference type="VEuPathDB" id="HostDB:ENSMUSG00000057229"/>
<dbReference type="eggNOG" id="KOG3864">
    <property type="taxonomic scope" value="Eukaryota"/>
</dbReference>
<dbReference type="GeneTree" id="ENSGT00940000160500"/>
<dbReference type="HOGENOM" id="CLU_072474_0_0_1"/>
<dbReference type="InParanoid" id="Q9D7K5"/>
<dbReference type="OMA" id="GFRFAGQ"/>
<dbReference type="OrthoDB" id="5859291at2759"/>
<dbReference type="PhylomeDB" id="Q9D7K5"/>
<dbReference type="Reactome" id="R-MMU-6799198">
    <property type="pathway name" value="Complex I biogenesis"/>
</dbReference>
<dbReference type="BioGRID-ORCS" id="66349">
    <property type="hits" value="17 hits in 76 CRISPR screens"/>
</dbReference>
<dbReference type="PRO" id="PR:Q9D7K5"/>
<dbReference type="Proteomes" id="UP000000589">
    <property type="component" value="Chromosome 7"/>
</dbReference>
<dbReference type="RNAct" id="Q9D7K5">
    <property type="molecule type" value="protein"/>
</dbReference>
<dbReference type="Bgee" id="ENSMUSG00000057229">
    <property type="expression patterns" value="Expressed in retinal neural layer and 210 other cell types or tissues"/>
</dbReference>
<dbReference type="ExpressionAtlas" id="Q9D7K5">
    <property type="expression patterns" value="baseline and differential"/>
</dbReference>
<dbReference type="GO" id="GO:0005739">
    <property type="term" value="C:mitochondrion"/>
    <property type="evidence" value="ECO:0007005"/>
    <property type="project" value="MGI"/>
</dbReference>
<dbReference type="GO" id="GO:0032981">
    <property type="term" value="P:mitochondrial respiratory chain complex I assembly"/>
    <property type="evidence" value="ECO:0000250"/>
    <property type="project" value="UniProtKB"/>
</dbReference>
<dbReference type="FunFam" id="3.80.10.10:FF:000168">
    <property type="entry name" value="Distal membrane arm assembly complex 2"/>
    <property type="match status" value="1"/>
</dbReference>
<dbReference type="Gene3D" id="3.80.10.10">
    <property type="entry name" value="Ribonuclease Inhibitor"/>
    <property type="match status" value="1"/>
</dbReference>
<dbReference type="InterPro" id="IPR032675">
    <property type="entry name" value="LRR_dom_sf"/>
</dbReference>
<dbReference type="SUPFAM" id="SSF52047">
    <property type="entry name" value="RNI-like"/>
    <property type="match status" value="1"/>
</dbReference>
<comment type="function">
    <text evidence="1">Required for the assembly of the mitochondrial NADH:ubiquinone oxidoreductase complex (complex I). Involved in the assembly of the distal region of complex I.</text>
</comment>
<comment type="subunit">
    <text evidence="1">Interacts with incompletely assembled mitochondrial NADH:ubiquinone oxidoreductase complex (complex I).</text>
</comment>
<comment type="subcellular location">
    <subcellularLocation>
        <location evidence="2">Mitochondrion</location>
    </subcellularLocation>
</comment>
<comment type="similarity">
    <text evidence="3">Belongs to the ATP synthase subunit s family.</text>
</comment>
<sequence>MAAPRAVLHLGAREWNGRARRIHGMSELVTPDSSREKKRTLLQFLSDHFQDIQTLREYLLQKQISKVNRENRSFTNIQEKYGPYVAGAVFILKQGGAVKFQDKEEWIRPNNRSHFLAEIQKFQNVPVEAVDASGCAINYQGLSNLLPLKELRSLSLQRCPNLDDWCLSRLYLLAGSLQELSLAGCPRISERGLACLHHLQNLRRLDISDLPAVSHPGLTQILVEEMLPHCEVLGADWAQNLKLEPDKQPPDTSTPLSS</sequence>
<accession>Q9D7K5</accession>
<proteinExistence type="evidence at protein level"/>
<name>DMAC2_MOUSE</name>
<evidence type="ECO:0000250" key="1">
    <source>
        <dbReference type="UniProtKB" id="Q9NW81"/>
    </source>
</evidence>
<evidence type="ECO:0000269" key="2">
    <source>
    </source>
</evidence>
<evidence type="ECO:0000305" key="3"/>
<evidence type="ECO:0000312" key="4">
    <source>
        <dbReference type="MGI" id="MGI:1913599"/>
    </source>
</evidence>
<gene>
    <name type="primary">Dmac2</name>
    <name evidence="4" type="synonym">Atp5sl</name>
</gene>
<protein>
    <recommendedName>
        <fullName evidence="1">Distal membrane-arm assembly complex protein 2</fullName>
    </recommendedName>
    <alternativeName>
        <fullName evidence="3">ATP synthase subunit s-like protein</fullName>
    </alternativeName>
</protein>
<keyword id="KW-0496">Mitochondrion</keyword>
<keyword id="KW-1185">Reference proteome</keyword>
<reference key="1">
    <citation type="journal article" date="2005" name="Science">
        <title>The transcriptional landscape of the mammalian genome.</title>
        <authorList>
            <person name="Carninci P."/>
            <person name="Kasukawa T."/>
            <person name="Katayama S."/>
            <person name="Gough J."/>
            <person name="Frith M.C."/>
            <person name="Maeda N."/>
            <person name="Oyama R."/>
            <person name="Ravasi T."/>
            <person name="Lenhard B."/>
            <person name="Wells C."/>
            <person name="Kodzius R."/>
            <person name="Shimokawa K."/>
            <person name="Bajic V.B."/>
            <person name="Brenner S.E."/>
            <person name="Batalov S."/>
            <person name="Forrest A.R."/>
            <person name="Zavolan M."/>
            <person name="Davis M.J."/>
            <person name="Wilming L.G."/>
            <person name="Aidinis V."/>
            <person name="Allen J.E."/>
            <person name="Ambesi-Impiombato A."/>
            <person name="Apweiler R."/>
            <person name="Aturaliya R.N."/>
            <person name="Bailey T.L."/>
            <person name="Bansal M."/>
            <person name="Baxter L."/>
            <person name="Beisel K.W."/>
            <person name="Bersano T."/>
            <person name="Bono H."/>
            <person name="Chalk A.M."/>
            <person name="Chiu K.P."/>
            <person name="Choudhary V."/>
            <person name="Christoffels A."/>
            <person name="Clutterbuck D.R."/>
            <person name="Crowe M.L."/>
            <person name="Dalla E."/>
            <person name="Dalrymple B.P."/>
            <person name="de Bono B."/>
            <person name="Della Gatta G."/>
            <person name="di Bernardo D."/>
            <person name="Down T."/>
            <person name="Engstrom P."/>
            <person name="Fagiolini M."/>
            <person name="Faulkner G."/>
            <person name="Fletcher C.F."/>
            <person name="Fukushima T."/>
            <person name="Furuno M."/>
            <person name="Futaki S."/>
            <person name="Gariboldi M."/>
            <person name="Georgii-Hemming P."/>
            <person name="Gingeras T.R."/>
            <person name="Gojobori T."/>
            <person name="Green R.E."/>
            <person name="Gustincich S."/>
            <person name="Harbers M."/>
            <person name="Hayashi Y."/>
            <person name="Hensch T.K."/>
            <person name="Hirokawa N."/>
            <person name="Hill D."/>
            <person name="Huminiecki L."/>
            <person name="Iacono M."/>
            <person name="Ikeo K."/>
            <person name="Iwama A."/>
            <person name="Ishikawa T."/>
            <person name="Jakt M."/>
            <person name="Kanapin A."/>
            <person name="Katoh M."/>
            <person name="Kawasawa Y."/>
            <person name="Kelso J."/>
            <person name="Kitamura H."/>
            <person name="Kitano H."/>
            <person name="Kollias G."/>
            <person name="Krishnan S.P."/>
            <person name="Kruger A."/>
            <person name="Kummerfeld S.K."/>
            <person name="Kurochkin I.V."/>
            <person name="Lareau L.F."/>
            <person name="Lazarevic D."/>
            <person name="Lipovich L."/>
            <person name="Liu J."/>
            <person name="Liuni S."/>
            <person name="McWilliam S."/>
            <person name="Madan Babu M."/>
            <person name="Madera M."/>
            <person name="Marchionni L."/>
            <person name="Matsuda H."/>
            <person name="Matsuzawa S."/>
            <person name="Miki H."/>
            <person name="Mignone F."/>
            <person name="Miyake S."/>
            <person name="Morris K."/>
            <person name="Mottagui-Tabar S."/>
            <person name="Mulder N."/>
            <person name="Nakano N."/>
            <person name="Nakauchi H."/>
            <person name="Ng P."/>
            <person name="Nilsson R."/>
            <person name="Nishiguchi S."/>
            <person name="Nishikawa S."/>
            <person name="Nori F."/>
            <person name="Ohara O."/>
            <person name="Okazaki Y."/>
            <person name="Orlando V."/>
            <person name="Pang K.C."/>
            <person name="Pavan W.J."/>
            <person name="Pavesi G."/>
            <person name="Pesole G."/>
            <person name="Petrovsky N."/>
            <person name="Piazza S."/>
            <person name="Reed J."/>
            <person name="Reid J.F."/>
            <person name="Ring B.Z."/>
            <person name="Ringwald M."/>
            <person name="Rost B."/>
            <person name="Ruan Y."/>
            <person name="Salzberg S.L."/>
            <person name="Sandelin A."/>
            <person name="Schneider C."/>
            <person name="Schoenbach C."/>
            <person name="Sekiguchi K."/>
            <person name="Semple C.A."/>
            <person name="Seno S."/>
            <person name="Sessa L."/>
            <person name="Sheng Y."/>
            <person name="Shibata Y."/>
            <person name="Shimada H."/>
            <person name="Shimada K."/>
            <person name="Silva D."/>
            <person name="Sinclair B."/>
            <person name="Sperling S."/>
            <person name="Stupka E."/>
            <person name="Sugiura K."/>
            <person name="Sultana R."/>
            <person name="Takenaka Y."/>
            <person name="Taki K."/>
            <person name="Tammoja K."/>
            <person name="Tan S.L."/>
            <person name="Tang S."/>
            <person name="Taylor M.S."/>
            <person name="Tegner J."/>
            <person name="Teichmann S.A."/>
            <person name="Ueda H.R."/>
            <person name="van Nimwegen E."/>
            <person name="Verardo R."/>
            <person name="Wei C.L."/>
            <person name="Yagi K."/>
            <person name="Yamanishi H."/>
            <person name="Zabarovsky E."/>
            <person name="Zhu S."/>
            <person name="Zimmer A."/>
            <person name="Hide W."/>
            <person name="Bult C."/>
            <person name="Grimmond S.M."/>
            <person name="Teasdale R.D."/>
            <person name="Liu E.T."/>
            <person name="Brusic V."/>
            <person name="Quackenbush J."/>
            <person name="Wahlestedt C."/>
            <person name="Mattick J.S."/>
            <person name="Hume D.A."/>
            <person name="Kai C."/>
            <person name="Sasaki D."/>
            <person name="Tomaru Y."/>
            <person name="Fukuda S."/>
            <person name="Kanamori-Katayama M."/>
            <person name="Suzuki M."/>
            <person name="Aoki J."/>
            <person name="Arakawa T."/>
            <person name="Iida J."/>
            <person name="Imamura K."/>
            <person name="Itoh M."/>
            <person name="Kato T."/>
            <person name="Kawaji H."/>
            <person name="Kawagashira N."/>
            <person name="Kawashima T."/>
            <person name="Kojima M."/>
            <person name="Kondo S."/>
            <person name="Konno H."/>
            <person name="Nakano K."/>
            <person name="Ninomiya N."/>
            <person name="Nishio T."/>
            <person name="Okada M."/>
            <person name="Plessy C."/>
            <person name="Shibata K."/>
            <person name="Shiraki T."/>
            <person name="Suzuki S."/>
            <person name="Tagami M."/>
            <person name="Waki K."/>
            <person name="Watahiki A."/>
            <person name="Okamura-Oho Y."/>
            <person name="Suzuki H."/>
            <person name="Kawai J."/>
            <person name="Hayashizaki Y."/>
        </authorList>
    </citation>
    <scope>NUCLEOTIDE SEQUENCE [LARGE SCALE MRNA]</scope>
    <source>
        <strain>C57BL/6J</strain>
        <tissue>Tongue</tissue>
    </source>
</reference>
<reference key="2">
    <citation type="journal article" date="2008" name="Cell">
        <title>A mitochondrial protein compendium elucidates complex I disease biology.</title>
        <authorList>
            <person name="Pagliarini D.J."/>
            <person name="Calvo S.E."/>
            <person name="Chang B."/>
            <person name="Sheth S.A."/>
            <person name="Vafai S.B."/>
            <person name="Ong S.E."/>
            <person name="Walford G.A."/>
            <person name="Sugiana C."/>
            <person name="Boneh A."/>
            <person name="Chen W.K."/>
            <person name="Hill D.E."/>
            <person name="Vidal M."/>
            <person name="Evans J.G."/>
            <person name="Thorburn D.R."/>
            <person name="Carr S.A."/>
            <person name="Mootha V.K."/>
        </authorList>
    </citation>
    <scope>SUBCELLULAR LOCATION</scope>
</reference>
<reference key="3">
    <citation type="journal article" date="2010" name="Cell">
        <title>A tissue-specific atlas of mouse protein phosphorylation and expression.</title>
        <authorList>
            <person name="Huttlin E.L."/>
            <person name="Jedrychowski M.P."/>
            <person name="Elias J.E."/>
            <person name="Goswami T."/>
            <person name="Rad R."/>
            <person name="Beausoleil S.A."/>
            <person name="Villen J."/>
            <person name="Haas W."/>
            <person name="Sowa M.E."/>
            <person name="Gygi S.P."/>
        </authorList>
    </citation>
    <scope>IDENTIFICATION BY MASS SPECTROMETRY [LARGE SCALE ANALYSIS]</scope>
    <source>
        <tissue>Brain</tissue>
        <tissue>Heart</tissue>
        <tissue>Kidney</tissue>
        <tissue>Liver</tissue>
        <tissue>Spleen</tissue>
        <tissue>Testis</tissue>
    </source>
</reference>
<feature type="chain" id="PRO_0000318697" description="Distal membrane-arm assembly complex protein 2">
    <location>
        <begin position="1"/>
        <end position="258"/>
    </location>
</feature>
<organism>
    <name type="scientific">Mus musculus</name>
    <name type="common">Mouse</name>
    <dbReference type="NCBI Taxonomy" id="10090"/>
    <lineage>
        <taxon>Eukaryota</taxon>
        <taxon>Metazoa</taxon>
        <taxon>Chordata</taxon>
        <taxon>Craniata</taxon>
        <taxon>Vertebrata</taxon>
        <taxon>Euteleostomi</taxon>
        <taxon>Mammalia</taxon>
        <taxon>Eutheria</taxon>
        <taxon>Euarchontoglires</taxon>
        <taxon>Glires</taxon>
        <taxon>Rodentia</taxon>
        <taxon>Myomorpha</taxon>
        <taxon>Muroidea</taxon>
        <taxon>Muridae</taxon>
        <taxon>Murinae</taxon>
        <taxon>Mus</taxon>
        <taxon>Mus</taxon>
    </lineage>
</organism>